<accession>H1ZZH9</accession>
<organism>
    <name type="scientific">Tityus obscurus</name>
    <name type="common">Amazonian scorpion</name>
    <name type="synonym">Tityus cambridgei</name>
    <dbReference type="NCBI Taxonomy" id="1221240"/>
    <lineage>
        <taxon>Eukaryota</taxon>
        <taxon>Metazoa</taxon>
        <taxon>Ecdysozoa</taxon>
        <taxon>Arthropoda</taxon>
        <taxon>Chelicerata</taxon>
        <taxon>Arachnida</taxon>
        <taxon>Scorpiones</taxon>
        <taxon>Buthida</taxon>
        <taxon>Buthoidea</taxon>
        <taxon>Buthidae</taxon>
        <taxon>Tityus</taxon>
    </lineage>
</organism>
<keyword id="KW-0027">Amidation</keyword>
<keyword id="KW-1015">Disulfide bond</keyword>
<keyword id="KW-0872">Ion channel impairing toxin</keyword>
<keyword id="KW-0528">Neurotoxin</keyword>
<keyword id="KW-0964">Secreted</keyword>
<keyword id="KW-0732">Signal</keyword>
<keyword id="KW-0800">Toxin</keyword>
<keyword id="KW-0738">Voltage-gated sodium channel impairing toxin</keyword>
<comment type="function">
    <text evidence="1">Alpha toxins bind voltage-independently at site-3 of sodium channels (Nav) and inhibit the inactivation of the activated channels, thereby blocking neuronal transmission.</text>
</comment>
<comment type="subcellular location">
    <subcellularLocation>
        <location evidence="1">Secreted</location>
    </subcellularLocation>
</comment>
<comment type="tissue specificity">
    <text>Expressed by the venom gland.</text>
</comment>
<comment type="domain">
    <text evidence="4">Has the structural arrangement of an alpha-helix connected to antiparallel beta-sheets by disulfide bonds (CS-alpha/beta).</text>
</comment>
<comment type="similarity">
    <text evidence="4">Belongs to the long (4 C-C) scorpion toxin superfamily. Sodium channel inhibitor family. Alpha subfamily.</text>
</comment>
<proteinExistence type="evidence at transcript level"/>
<evidence type="ECO:0000250" key="1"/>
<evidence type="ECO:0000255" key="2"/>
<evidence type="ECO:0000255" key="3">
    <source>
        <dbReference type="PROSITE-ProRule" id="PRU01210"/>
    </source>
</evidence>
<evidence type="ECO:0000305" key="4"/>
<protein>
    <recommendedName>
        <fullName>Toxin To10</fullName>
    </recommendedName>
    <alternativeName>
        <fullName>T-alpha* NaTx3.9</fullName>
    </alternativeName>
</protein>
<name>SCX10_TITOB</name>
<reference key="1">
    <citation type="journal article" date="2012" name="PLoS ONE">
        <title>Identification and phylogenetic analysis of Tityus pachyurus and Tityus obscurus novel putative Na+-channel scorpion toxins.</title>
        <authorList>
            <person name="Guerrero-Vargas J.A."/>
            <person name="Mourao C.B."/>
            <person name="Quintero-Hernandez V."/>
            <person name="Possani L.D."/>
            <person name="Schwartz E.F."/>
        </authorList>
    </citation>
    <scope>NUCLEOTIDE SEQUENCE [MRNA]</scope>
    <scope>NOMENCLATURE</scope>
    <source>
        <tissue>Venom gland</tissue>
    </source>
</reference>
<dbReference type="EMBL" id="HE585233">
    <property type="protein sequence ID" value="CCD31427.1"/>
    <property type="molecule type" value="mRNA"/>
</dbReference>
<dbReference type="SMR" id="H1ZZH9"/>
<dbReference type="GO" id="GO:0005576">
    <property type="term" value="C:extracellular region"/>
    <property type="evidence" value="ECO:0007669"/>
    <property type="project" value="UniProtKB-SubCell"/>
</dbReference>
<dbReference type="GO" id="GO:0019871">
    <property type="term" value="F:sodium channel inhibitor activity"/>
    <property type="evidence" value="ECO:0007669"/>
    <property type="project" value="InterPro"/>
</dbReference>
<dbReference type="GO" id="GO:0090729">
    <property type="term" value="F:toxin activity"/>
    <property type="evidence" value="ECO:0007669"/>
    <property type="project" value="UniProtKB-KW"/>
</dbReference>
<dbReference type="GO" id="GO:0006952">
    <property type="term" value="P:defense response"/>
    <property type="evidence" value="ECO:0007669"/>
    <property type="project" value="InterPro"/>
</dbReference>
<dbReference type="CDD" id="cd23106">
    <property type="entry name" value="neurotoxins_LC_scorpion"/>
    <property type="match status" value="1"/>
</dbReference>
<dbReference type="Gene3D" id="3.30.30.10">
    <property type="entry name" value="Knottin, scorpion toxin-like"/>
    <property type="match status" value="1"/>
</dbReference>
<dbReference type="InterPro" id="IPR044062">
    <property type="entry name" value="LCN-type_CS_alpha_beta_dom"/>
</dbReference>
<dbReference type="InterPro" id="IPR003614">
    <property type="entry name" value="Scorpion_toxin-like"/>
</dbReference>
<dbReference type="InterPro" id="IPR036574">
    <property type="entry name" value="Scorpion_toxin-like_sf"/>
</dbReference>
<dbReference type="InterPro" id="IPR018218">
    <property type="entry name" value="Scorpion_toxinL"/>
</dbReference>
<dbReference type="InterPro" id="IPR002061">
    <property type="entry name" value="Scorpion_toxinL/defensin"/>
</dbReference>
<dbReference type="Pfam" id="PF00537">
    <property type="entry name" value="Toxin_3"/>
    <property type="match status" value="1"/>
</dbReference>
<dbReference type="PRINTS" id="PR00285">
    <property type="entry name" value="SCORPNTOXIN"/>
</dbReference>
<dbReference type="SMART" id="SM00505">
    <property type="entry name" value="Knot1"/>
    <property type="match status" value="1"/>
</dbReference>
<dbReference type="SUPFAM" id="SSF57095">
    <property type="entry name" value="Scorpion toxin-like"/>
    <property type="match status" value="1"/>
</dbReference>
<dbReference type="PROSITE" id="PS51863">
    <property type="entry name" value="LCN_CSAB"/>
    <property type="match status" value="1"/>
</dbReference>
<feature type="signal peptide" evidence="2">
    <location>
        <begin position="1"/>
        <end position="19"/>
    </location>
</feature>
<feature type="chain" id="PRO_5000851432" description="Toxin To10">
    <location>
        <begin position="20"/>
        <end position="81"/>
    </location>
</feature>
<feature type="domain" description="LCN-type CS-alpha/beta" evidence="3">
    <location>
        <begin position="21"/>
        <end position="80"/>
    </location>
</feature>
<feature type="modified residue" description="Proline amide" evidence="1">
    <location>
        <position position="81"/>
    </location>
</feature>
<feature type="disulfide bond" evidence="3">
    <location>
        <begin position="30"/>
        <end position="79"/>
    </location>
</feature>
<feature type="disulfide bond" evidence="3">
    <location>
        <begin position="34"/>
        <end position="55"/>
    </location>
</feature>
<feature type="disulfide bond" evidence="3">
    <location>
        <begin position="41"/>
        <end position="62"/>
    </location>
</feature>
<feature type="disulfide bond" evidence="3">
    <location>
        <begin position="45"/>
        <end position="64"/>
    </location>
</feature>
<sequence length="84" mass="9187">MNYSTLIAVASLLTAGTESKKDGYPVEGSCAFPCGYDNAYCDKLCKERKADSGYCYWVNILCYCYGLPDNAAIKGYGRCKPGKK</sequence>